<name>YA19A_YEAST</name>
<comment type="miscellaneous">
    <text evidence="1">Partially overlaps ATS1.</text>
</comment>
<comment type="caution">
    <text evidence="2">Product of a dubious gene prediction unlikely to encode a functional protein. Because of that it is not part of the S.cerevisiae S288c complete/reference proteome set.</text>
</comment>
<feature type="chain" id="PRO_0000430976" description="Putative uncharacterized protein YAL019W-A">
    <location>
        <begin position="1"/>
        <end position="189"/>
    </location>
</feature>
<dbReference type="EMBL" id="KJ412206">
    <property type="protein sequence ID" value="AHX39249.1"/>
    <property type="molecule type" value="Genomic_DNA"/>
</dbReference>
<dbReference type="IntAct" id="A0A023PXA5">
    <property type="interactions" value="1"/>
</dbReference>
<dbReference type="MINT" id="A0A023PXA5"/>
<dbReference type="PaxDb" id="4932-YAL019W-A"/>
<dbReference type="EnsemblFungi" id="YAL019W-A_mRNA">
    <property type="protein sequence ID" value="YAL019W-A"/>
    <property type="gene ID" value="YAL019W-A"/>
</dbReference>
<dbReference type="AGR" id="SGD:S000028729"/>
<dbReference type="SGD" id="S000028729">
    <property type="gene designation" value="YAL019W-A"/>
</dbReference>
<dbReference type="HOGENOM" id="CLU_1435494_0_0_1"/>
<gene>
    <name evidence="3" type="ordered locus">YAL019W-A</name>
</gene>
<sequence>MLLSELVATASSLPYTAISIHNNCRVPAARHIHHGCRYFHGPPVMHLPQCLRTIQFSPSVISTSYQIPVICQHHAVVPTARYLPDYCSIISWHRPLWGIHILIVPQSQLPLPIRPKRIHTTHRYKPVIAFNDHIPSLALWICLHYQGSNGCVTPVAAKFFIIFHFVGLKEIMSPSRNATRNLNQYWRVL</sequence>
<evidence type="ECO:0000305" key="1"/>
<evidence type="ECO:0000305" key="2">
    <source>
    </source>
</evidence>
<evidence type="ECO:0000312" key="3">
    <source>
        <dbReference type="SGD" id="S000028729"/>
    </source>
</evidence>
<reference key="1">
    <citation type="journal article" date="1995" name="Proc. Natl. Acad. Sci. U.S.A.">
        <title>The nucleotide sequence of chromosome I from Saccharomyces cerevisiae.</title>
        <authorList>
            <person name="Bussey H."/>
            <person name="Kaback D.B."/>
            <person name="Zhong W.-W."/>
            <person name="Vo D.H."/>
            <person name="Clark M.W."/>
            <person name="Fortin N."/>
            <person name="Hall J."/>
            <person name="Ouellette B.F.F."/>
            <person name="Keng T."/>
            <person name="Barton A.B."/>
            <person name="Su Y."/>
            <person name="Davies C.J."/>
            <person name="Storms R.K."/>
        </authorList>
    </citation>
    <scope>NUCLEOTIDE SEQUENCE [LARGE SCALE GENOMIC DNA]</scope>
    <source>
        <strain>ATCC 204508 / S288c</strain>
    </source>
</reference>
<reference key="2">
    <citation type="journal article" date="2014" name="G3 (Bethesda)">
        <title>The reference genome sequence of Saccharomyces cerevisiae: Then and now.</title>
        <authorList>
            <person name="Engel S.R."/>
            <person name="Dietrich F.S."/>
            <person name="Fisk D.G."/>
            <person name="Binkley G."/>
            <person name="Balakrishnan R."/>
            <person name="Costanzo M.C."/>
            <person name="Dwight S.S."/>
            <person name="Hitz B.C."/>
            <person name="Karra K."/>
            <person name="Nash R.S."/>
            <person name="Weng S."/>
            <person name="Wong E.D."/>
            <person name="Lloyd P."/>
            <person name="Skrzypek M.S."/>
            <person name="Miyasato S.R."/>
            <person name="Simison M."/>
            <person name="Cherry J.M."/>
        </authorList>
    </citation>
    <scope>GENOME REANNOTATION</scope>
    <source>
        <strain>ATCC 204508 / S288c</strain>
    </source>
</reference>
<proteinExistence type="uncertain"/>
<protein>
    <recommendedName>
        <fullName evidence="1">Putative uncharacterized protein YAL019W-A</fullName>
    </recommendedName>
</protein>
<accession>A0A023PXA5</accession>
<organism>
    <name type="scientific">Saccharomyces cerevisiae (strain ATCC 204508 / S288c)</name>
    <name type="common">Baker's yeast</name>
    <dbReference type="NCBI Taxonomy" id="559292"/>
    <lineage>
        <taxon>Eukaryota</taxon>
        <taxon>Fungi</taxon>
        <taxon>Dikarya</taxon>
        <taxon>Ascomycota</taxon>
        <taxon>Saccharomycotina</taxon>
        <taxon>Saccharomycetes</taxon>
        <taxon>Saccharomycetales</taxon>
        <taxon>Saccharomycetaceae</taxon>
        <taxon>Saccharomyces</taxon>
    </lineage>
</organism>